<gene>
    <name evidence="1" type="primary">ilvD</name>
    <name type="ordered locus">BPSL0969</name>
</gene>
<accession>Q63WB9</accession>
<sequence>MSYNRRSKNITQGVARSPNRSMYYALGYQKEDFDKPMIGIANGHSTITPCNAGLQRLSDAAVAAVKDAGANPQIFGTPTISDGMSMGTEGMKYSLVSREVIADCIETCVQGQWMDGVVVVGGCDKNMPGGMIALARINVPGIYVYGGTIRPGHWKGHDLTIVSSFEAVGEFTAGRMSQEDFEGVEKNACPTTGSCGGMYTANTMSSSFEALGMSLLYSSTMANPDQEKVDSAAESARVLVEAVKKDLKPRDIITKQSIENAVSVIMATGGSTNAVLHYLAIAHAAEIDWSIEDFERIRKRVPVICDLKPSGQYVATDLHAAGGIPQVMKLLLDAGLLHGDCMTITGRTLAEELKDVPSVPRADQKVIHPIDQALYKEGHLAILKGNLAEDGAVAKITGLKNPVITGPARVFDDEQSALAAILDDRIRAGDVVVLRYLGPQGGPGMPEMLAPTSAIIGKGLGESVGLITDGRFSGGTWGMVVGHVAPEAFVGGTIALVQEGDSITIDAHKLLLQLNVDDAELARRRAAWKQPAPRYTRGVLAKYAALARPANQGAVTG</sequence>
<evidence type="ECO:0000255" key="1">
    <source>
        <dbReference type="HAMAP-Rule" id="MF_00012"/>
    </source>
</evidence>
<comment type="function">
    <text evidence="1">Functions in the biosynthesis of branched-chain amino acids. Catalyzes the dehydration of (2R,3R)-2,3-dihydroxy-3-methylpentanoate (2,3-dihydroxy-3-methylvalerate) into 2-oxo-3-methylpentanoate (2-oxo-3-methylvalerate) and of (2R)-2,3-dihydroxy-3-methylbutanoate (2,3-dihydroxyisovalerate) into 2-oxo-3-methylbutanoate (2-oxoisovalerate), the penultimate precursor to L-isoleucine and L-valine, respectively.</text>
</comment>
<comment type="catalytic activity">
    <reaction evidence="1">
        <text>(2R)-2,3-dihydroxy-3-methylbutanoate = 3-methyl-2-oxobutanoate + H2O</text>
        <dbReference type="Rhea" id="RHEA:24809"/>
        <dbReference type="ChEBI" id="CHEBI:11851"/>
        <dbReference type="ChEBI" id="CHEBI:15377"/>
        <dbReference type="ChEBI" id="CHEBI:49072"/>
        <dbReference type="EC" id="4.2.1.9"/>
    </reaction>
    <physiologicalReaction direction="left-to-right" evidence="1">
        <dbReference type="Rhea" id="RHEA:24810"/>
    </physiologicalReaction>
</comment>
<comment type="catalytic activity">
    <reaction evidence="1">
        <text>(2R,3R)-2,3-dihydroxy-3-methylpentanoate = (S)-3-methyl-2-oxopentanoate + H2O</text>
        <dbReference type="Rhea" id="RHEA:27694"/>
        <dbReference type="ChEBI" id="CHEBI:15377"/>
        <dbReference type="ChEBI" id="CHEBI:35146"/>
        <dbReference type="ChEBI" id="CHEBI:49258"/>
        <dbReference type="EC" id="4.2.1.9"/>
    </reaction>
    <physiologicalReaction direction="left-to-right" evidence="1">
        <dbReference type="Rhea" id="RHEA:27695"/>
    </physiologicalReaction>
</comment>
<comment type="cofactor">
    <cofactor evidence="1">
        <name>[2Fe-2S] cluster</name>
        <dbReference type="ChEBI" id="CHEBI:190135"/>
    </cofactor>
    <text evidence="1">Binds 1 [2Fe-2S] cluster per subunit. This cluster acts as a Lewis acid cofactor.</text>
</comment>
<comment type="cofactor">
    <cofactor evidence="1">
        <name>Mg(2+)</name>
        <dbReference type="ChEBI" id="CHEBI:18420"/>
    </cofactor>
</comment>
<comment type="pathway">
    <text evidence="1">Amino-acid biosynthesis; L-isoleucine biosynthesis; L-isoleucine from 2-oxobutanoate: step 3/4.</text>
</comment>
<comment type="pathway">
    <text evidence="1">Amino-acid biosynthesis; L-valine biosynthesis; L-valine from pyruvate: step 3/4.</text>
</comment>
<comment type="subunit">
    <text evidence="1">Homodimer.</text>
</comment>
<comment type="similarity">
    <text evidence="1">Belongs to the IlvD/Edd family.</text>
</comment>
<protein>
    <recommendedName>
        <fullName evidence="1">Dihydroxy-acid dehydratase</fullName>
        <shortName evidence="1">DAD</shortName>
        <ecNumber evidence="1">4.2.1.9</ecNumber>
    </recommendedName>
</protein>
<feature type="chain" id="PRO_0000225377" description="Dihydroxy-acid dehydratase">
    <location>
        <begin position="1"/>
        <end position="557"/>
    </location>
</feature>
<feature type="active site" description="Proton acceptor" evidence="1">
    <location>
        <position position="473"/>
    </location>
</feature>
<feature type="binding site" evidence="1">
    <location>
        <position position="50"/>
    </location>
    <ligand>
        <name>[2Fe-2S] cluster</name>
        <dbReference type="ChEBI" id="CHEBI:190135"/>
    </ligand>
</feature>
<feature type="binding site" evidence="1">
    <location>
        <position position="82"/>
    </location>
    <ligand>
        <name>Mg(2+)</name>
        <dbReference type="ChEBI" id="CHEBI:18420"/>
    </ligand>
</feature>
<feature type="binding site" evidence="1">
    <location>
        <position position="123"/>
    </location>
    <ligand>
        <name>[2Fe-2S] cluster</name>
        <dbReference type="ChEBI" id="CHEBI:190135"/>
    </ligand>
</feature>
<feature type="binding site" evidence="1">
    <location>
        <position position="124"/>
    </location>
    <ligand>
        <name>Mg(2+)</name>
        <dbReference type="ChEBI" id="CHEBI:18420"/>
    </ligand>
</feature>
<feature type="binding site" description="via carbamate group" evidence="1">
    <location>
        <position position="125"/>
    </location>
    <ligand>
        <name>Mg(2+)</name>
        <dbReference type="ChEBI" id="CHEBI:18420"/>
    </ligand>
</feature>
<feature type="binding site" evidence="1">
    <location>
        <position position="195"/>
    </location>
    <ligand>
        <name>[2Fe-2S] cluster</name>
        <dbReference type="ChEBI" id="CHEBI:190135"/>
    </ligand>
</feature>
<feature type="binding site" evidence="1">
    <location>
        <position position="447"/>
    </location>
    <ligand>
        <name>Mg(2+)</name>
        <dbReference type="ChEBI" id="CHEBI:18420"/>
    </ligand>
</feature>
<feature type="modified residue" description="N6-carboxylysine" evidence="1">
    <location>
        <position position="125"/>
    </location>
</feature>
<dbReference type="EC" id="4.2.1.9" evidence="1"/>
<dbReference type="EMBL" id="BX571965">
    <property type="protein sequence ID" value="CAH34965.1"/>
    <property type="molecule type" value="Genomic_DNA"/>
</dbReference>
<dbReference type="RefSeq" id="WP_004191611.1">
    <property type="nucleotide sequence ID" value="NZ_CP009538.1"/>
</dbReference>
<dbReference type="RefSeq" id="YP_107597.1">
    <property type="nucleotide sequence ID" value="NC_006350.1"/>
</dbReference>
<dbReference type="SMR" id="Q63WB9"/>
<dbReference type="STRING" id="272560.BPSL0969"/>
<dbReference type="GeneID" id="92978440"/>
<dbReference type="KEGG" id="bps:BPSL0969"/>
<dbReference type="PATRIC" id="fig|272560.51.peg.607"/>
<dbReference type="eggNOG" id="COG0129">
    <property type="taxonomic scope" value="Bacteria"/>
</dbReference>
<dbReference type="UniPathway" id="UPA00047">
    <property type="reaction ID" value="UER00057"/>
</dbReference>
<dbReference type="UniPathway" id="UPA00049">
    <property type="reaction ID" value="UER00061"/>
</dbReference>
<dbReference type="Proteomes" id="UP000000605">
    <property type="component" value="Chromosome 1"/>
</dbReference>
<dbReference type="GO" id="GO:0051537">
    <property type="term" value="F:2 iron, 2 sulfur cluster binding"/>
    <property type="evidence" value="ECO:0007669"/>
    <property type="project" value="UniProtKB-UniRule"/>
</dbReference>
<dbReference type="GO" id="GO:0004160">
    <property type="term" value="F:dihydroxy-acid dehydratase activity"/>
    <property type="evidence" value="ECO:0007669"/>
    <property type="project" value="UniProtKB-UniRule"/>
</dbReference>
<dbReference type="GO" id="GO:0000287">
    <property type="term" value="F:magnesium ion binding"/>
    <property type="evidence" value="ECO:0007669"/>
    <property type="project" value="UniProtKB-UniRule"/>
</dbReference>
<dbReference type="GO" id="GO:0009097">
    <property type="term" value="P:isoleucine biosynthetic process"/>
    <property type="evidence" value="ECO:0007669"/>
    <property type="project" value="UniProtKB-UniRule"/>
</dbReference>
<dbReference type="GO" id="GO:0009099">
    <property type="term" value="P:L-valine biosynthetic process"/>
    <property type="evidence" value="ECO:0007669"/>
    <property type="project" value="UniProtKB-UniRule"/>
</dbReference>
<dbReference type="FunFam" id="3.50.30.80:FF:000001">
    <property type="entry name" value="Dihydroxy-acid dehydratase"/>
    <property type="match status" value="1"/>
</dbReference>
<dbReference type="Gene3D" id="3.50.30.80">
    <property type="entry name" value="IlvD/EDD C-terminal domain-like"/>
    <property type="match status" value="1"/>
</dbReference>
<dbReference type="HAMAP" id="MF_00012">
    <property type="entry name" value="IlvD"/>
    <property type="match status" value="1"/>
</dbReference>
<dbReference type="InterPro" id="IPR050165">
    <property type="entry name" value="DHAD_IlvD/Edd"/>
</dbReference>
<dbReference type="InterPro" id="IPR042096">
    <property type="entry name" value="Dihydro-acid_dehy_C"/>
</dbReference>
<dbReference type="InterPro" id="IPR004404">
    <property type="entry name" value="DihydroxyA_deHydtase"/>
</dbReference>
<dbReference type="InterPro" id="IPR020558">
    <property type="entry name" value="DiOHA_6PGluconate_deHydtase_CS"/>
</dbReference>
<dbReference type="InterPro" id="IPR056740">
    <property type="entry name" value="ILV_EDD_C"/>
</dbReference>
<dbReference type="InterPro" id="IPR000581">
    <property type="entry name" value="ILV_EDD_N"/>
</dbReference>
<dbReference type="InterPro" id="IPR037237">
    <property type="entry name" value="IlvD/EDD_N"/>
</dbReference>
<dbReference type="NCBIfam" id="TIGR00110">
    <property type="entry name" value="ilvD"/>
    <property type="match status" value="1"/>
</dbReference>
<dbReference type="NCBIfam" id="NF002068">
    <property type="entry name" value="PRK00911.1"/>
    <property type="match status" value="1"/>
</dbReference>
<dbReference type="PANTHER" id="PTHR21000">
    <property type="entry name" value="DIHYDROXY-ACID DEHYDRATASE DAD"/>
    <property type="match status" value="1"/>
</dbReference>
<dbReference type="PANTHER" id="PTHR21000:SF5">
    <property type="entry name" value="DIHYDROXY-ACID DEHYDRATASE, MITOCHONDRIAL"/>
    <property type="match status" value="1"/>
</dbReference>
<dbReference type="Pfam" id="PF24877">
    <property type="entry name" value="ILV_EDD_C"/>
    <property type="match status" value="1"/>
</dbReference>
<dbReference type="Pfam" id="PF00920">
    <property type="entry name" value="ILVD_EDD_N"/>
    <property type="match status" value="1"/>
</dbReference>
<dbReference type="SUPFAM" id="SSF143975">
    <property type="entry name" value="IlvD/EDD N-terminal domain-like"/>
    <property type="match status" value="1"/>
</dbReference>
<dbReference type="SUPFAM" id="SSF52016">
    <property type="entry name" value="LeuD/IlvD-like"/>
    <property type="match status" value="1"/>
</dbReference>
<dbReference type="PROSITE" id="PS00886">
    <property type="entry name" value="ILVD_EDD_1"/>
    <property type="match status" value="1"/>
</dbReference>
<dbReference type="PROSITE" id="PS00887">
    <property type="entry name" value="ILVD_EDD_2"/>
    <property type="match status" value="1"/>
</dbReference>
<proteinExistence type="inferred from homology"/>
<organism>
    <name type="scientific">Burkholderia pseudomallei (strain K96243)</name>
    <dbReference type="NCBI Taxonomy" id="272560"/>
    <lineage>
        <taxon>Bacteria</taxon>
        <taxon>Pseudomonadati</taxon>
        <taxon>Pseudomonadota</taxon>
        <taxon>Betaproteobacteria</taxon>
        <taxon>Burkholderiales</taxon>
        <taxon>Burkholderiaceae</taxon>
        <taxon>Burkholderia</taxon>
        <taxon>pseudomallei group</taxon>
    </lineage>
</organism>
<reference key="1">
    <citation type="journal article" date="2004" name="Proc. Natl. Acad. Sci. U.S.A.">
        <title>Genomic plasticity of the causative agent of melioidosis, Burkholderia pseudomallei.</title>
        <authorList>
            <person name="Holden M.T.G."/>
            <person name="Titball R.W."/>
            <person name="Peacock S.J."/>
            <person name="Cerdeno-Tarraga A.-M."/>
            <person name="Atkins T."/>
            <person name="Crossman L.C."/>
            <person name="Pitt T."/>
            <person name="Churcher C."/>
            <person name="Mungall K.L."/>
            <person name="Bentley S.D."/>
            <person name="Sebaihia M."/>
            <person name="Thomson N.R."/>
            <person name="Bason N."/>
            <person name="Beacham I.R."/>
            <person name="Brooks K."/>
            <person name="Brown K.A."/>
            <person name="Brown N.F."/>
            <person name="Challis G.L."/>
            <person name="Cherevach I."/>
            <person name="Chillingworth T."/>
            <person name="Cronin A."/>
            <person name="Crossett B."/>
            <person name="Davis P."/>
            <person name="DeShazer D."/>
            <person name="Feltwell T."/>
            <person name="Fraser A."/>
            <person name="Hance Z."/>
            <person name="Hauser H."/>
            <person name="Holroyd S."/>
            <person name="Jagels K."/>
            <person name="Keith K.E."/>
            <person name="Maddison M."/>
            <person name="Moule S."/>
            <person name="Price C."/>
            <person name="Quail M.A."/>
            <person name="Rabbinowitsch E."/>
            <person name="Rutherford K."/>
            <person name="Sanders M."/>
            <person name="Simmonds M."/>
            <person name="Songsivilai S."/>
            <person name="Stevens K."/>
            <person name="Tumapa S."/>
            <person name="Vesaratchavest M."/>
            <person name="Whitehead S."/>
            <person name="Yeats C."/>
            <person name="Barrell B.G."/>
            <person name="Oyston P.C.F."/>
            <person name="Parkhill J."/>
        </authorList>
    </citation>
    <scope>NUCLEOTIDE SEQUENCE [LARGE SCALE GENOMIC DNA]</scope>
    <source>
        <strain>K96243</strain>
    </source>
</reference>
<name>ILVD_BURPS</name>
<keyword id="KW-0001">2Fe-2S</keyword>
<keyword id="KW-0028">Amino-acid biosynthesis</keyword>
<keyword id="KW-0100">Branched-chain amino acid biosynthesis</keyword>
<keyword id="KW-0408">Iron</keyword>
<keyword id="KW-0411">Iron-sulfur</keyword>
<keyword id="KW-0456">Lyase</keyword>
<keyword id="KW-0460">Magnesium</keyword>
<keyword id="KW-0479">Metal-binding</keyword>
<keyword id="KW-1185">Reference proteome</keyword>